<proteinExistence type="predicted"/>
<name>Y05E_BPT4</name>
<organism>
    <name type="scientific">Enterobacteria phage T4</name>
    <name type="common">Bacteriophage T4</name>
    <dbReference type="NCBI Taxonomy" id="10665"/>
    <lineage>
        <taxon>Viruses</taxon>
        <taxon>Duplodnaviria</taxon>
        <taxon>Heunggongvirae</taxon>
        <taxon>Uroviricota</taxon>
        <taxon>Caudoviricetes</taxon>
        <taxon>Straboviridae</taxon>
        <taxon>Tevenvirinae</taxon>
        <taxon>Tequatrovirus</taxon>
    </lineage>
</organism>
<sequence length="100" mass="11979">MLYSKAREIYETKIKEAVFQFATTMRWTNDWEYSKNHKKPLVTRKAHMLVLIDREQIKAREALQNHKKAAFEWFMDNTAPETKKAVSAWFSGKNCERSFF</sequence>
<gene>
    <name type="primary">y05E</name>
    <name type="synonym">nrdC.9</name>
</gene>
<reference key="1">
    <citation type="submission" date="1996-11" db="EMBL/GenBank/DDBJ databases">
        <title>The 10.7 kb 'nonessential' region of bacteriophage T4 between the genes tk and nrdC: twenty new t4 genes, generally conserved among T-even phages.</title>
        <authorList>
            <person name="Mzhavia N."/>
            <person name="Marusich E."/>
            <person name="Djavakhishvili T."/>
            <person name="Neitzel J."/>
            <person name="Peterson S."/>
            <person name="Awaya M."/>
            <person name="Eidermiller J."/>
            <person name="Canada D."/>
            <person name="Tracy J."/>
            <person name="Gailbreath K."/>
            <person name="Paddison P."/>
            <person name="Anderson B."/>
            <person name="Stidham T."/>
            <person name="Blattner F."/>
            <person name="Kutter E.M."/>
        </authorList>
    </citation>
    <scope>NUCLEOTIDE SEQUENCE [GENOMIC DNA]</scope>
</reference>
<reference key="2">
    <citation type="journal article" date="2003" name="Microbiol. Mol. Biol. Rev.">
        <title>Bacteriophage T4 genome.</title>
        <authorList>
            <person name="Miller E.S."/>
            <person name="Kutter E."/>
            <person name="Mosig G."/>
            <person name="Arisaka F."/>
            <person name="Kunisawa T."/>
            <person name="Ruger W."/>
        </authorList>
    </citation>
    <scope>NUCLEOTIDE SEQUENCE [LARGE SCALE GENOMIC DNA]</scope>
</reference>
<organismHost>
    <name type="scientific">Escherichia coli</name>
    <dbReference type="NCBI Taxonomy" id="562"/>
</organismHost>
<protein>
    <recommendedName>
        <fullName>Uncharacterized 12.0 kDa protein in nrdC-mobD intergenic region</fullName>
    </recommendedName>
</protein>
<accession>P39260</accession>
<accession>Q96219</accession>
<dbReference type="EMBL" id="U76612">
    <property type="protein sequence ID" value="AAB26973.1"/>
    <property type="molecule type" value="Genomic_DNA"/>
</dbReference>
<dbReference type="EMBL" id="AF158101">
    <property type="protein sequence ID" value="AAD42640.1"/>
    <property type="molecule type" value="Genomic_DNA"/>
</dbReference>
<dbReference type="RefSeq" id="NP_049707.1">
    <property type="nucleotide sequence ID" value="NC_000866.4"/>
</dbReference>
<dbReference type="SMR" id="P39260"/>
<dbReference type="GeneID" id="1258649"/>
<dbReference type="KEGG" id="vg:1258649"/>
<dbReference type="OrthoDB" id="16420at10239"/>
<dbReference type="Proteomes" id="UP000009087">
    <property type="component" value="Segment"/>
</dbReference>
<dbReference type="InterPro" id="IPR055627">
    <property type="entry name" value="DUF7203"/>
</dbReference>
<dbReference type="Pfam" id="PF23833">
    <property type="entry name" value="DUF7203"/>
    <property type="match status" value="1"/>
</dbReference>
<feature type="chain" id="PRO_0000165123" description="Uncharacterized 12.0 kDa protein in nrdC-mobD intergenic region">
    <location>
        <begin position="1"/>
        <end position="100"/>
    </location>
</feature>
<keyword id="KW-1185">Reference proteome</keyword>